<feature type="chain" id="PRO_0000239326" description="Mitochondrial Rho GTPase 1" evidence="5">
    <location>
        <begin position="1"/>
        <end position="625"/>
    </location>
</feature>
<feature type="topological domain" description="Cytoplasmic" evidence="2">
    <location>
        <begin position="1"/>
        <end position="601"/>
    </location>
</feature>
<feature type="transmembrane region" description="Helical; Anchor for type IV membrane protein" evidence="2">
    <location>
        <begin position="602"/>
        <end position="622"/>
    </location>
</feature>
<feature type="topological domain" description="Mitochondrial intermembrane" evidence="2">
    <location>
        <begin position="623"/>
        <end position="625"/>
    </location>
</feature>
<feature type="domain" description="Miro 1">
    <location>
        <begin position="3"/>
        <end position="170"/>
    </location>
</feature>
<feature type="domain" description="EF-hand 1" evidence="3">
    <location>
        <begin position="188"/>
        <end position="223"/>
    </location>
</feature>
<feature type="domain" description="EF-hand 2" evidence="3">
    <location>
        <begin position="308"/>
        <end position="343"/>
    </location>
</feature>
<feature type="domain" description="Miro 2">
    <location>
        <begin position="420"/>
        <end position="625"/>
    </location>
</feature>
<feature type="binding site" evidence="2">
    <location>
        <begin position="16"/>
        <end position="23"/>
    </location>
    <ligand>
        <name>GTP</name>
        <dbReference type="ChEBI" id="CHEBI:37565"/>
        <label>1</label>
    </ligand>
</feature>
<feature type="binding site" evidence="2">
    <location>
        <begin position="62"/>
        <end position="66"/>
    </location>
    <ligand>
        <name>GTP</name>
        <dbReference type="ChEBI" id="CHEBI:37565"/>
        <label>1</label>
    </ligand>
</feature>
<feature type="binding site" evidence="2">
    <location>
        <begin position="123"/>
        <end position="126"/>
    </location>
    <ligand>
        <name>GTP</name>
        <dbReference type="ChEBI" id="CHEBI:37565"/>
        <label>1</label>
    </ligand>
</feature>
<feature type="binding site" evidence="3">
    <location>
        <position position="201"/>
    </location>
    <ligand>
        <name>Ca(2+)</name>
        <dbReference type="ChEBI" id="CHEBI:29108"/>
        <label>1</label>
    </ligand>
</feature>
<feature type="binding site" evidence="3">
    <location>
        <position position="203"/>
    </location>
    <ligand>
        <name>Ca(2+)</name>
        <dbReference type="ChEBI" id="CHEBI:29108"/>
        <label>1</label>
    </ligand>
</feature>
<feature type="binding site" evidence="3">
    <location>
        <position position="205"/>
    </location>
    <ligand>
        <name>Ca(2+)</name>
        <dbReference type="ChEBI" id="CHEBI:29108"/>
        <label>1</label>
    </ligand>
</feature>
<feature type="binding site" evidence="3">
    <location>
        <position position="207"/>
    </location>
    <ligand>
        <name>Ca(2+)</name>
        <dbReference type="ChEBI" id="CHEBI:29108"/>
        <label>1</label>
    </ligand>
</feature>
<feature type="binding site" evidence="3">
    <location>
        <position position="212"/>
    </location>
    <ligand>
        <name>Ca(2+)</name>
        <dbReference type="ChEBI" id="CHEBI:29108"/>
        <label>1</label>
    </ligand>
</feature>
<feature type="binding site" evidence="3">
    <location>
        <position position="321"/>
    </location>
    <ligand>
        <name>Ca(2+)</name>
        <dbReference type="ChEBI" id="CHEBI:29108"/>
        <label>2</label>
    </ligand>
</feature>
<feature type="binding site" evidence="3">
    <location>
        <position position="323"/>
    </location>
    <ligand>
        <name>Ca(2+)</name>
        <dbReference type="ChEBI" id="CHEBI:29108"/>
        <label>2</label>
    </ligand>
</feature>
<feature type="binding site" evidence="3">
    <location>
        <position position="325"/>
    </location>
    <ligand>
        <name>Ca(2+)</name>
        <dbReference type="ChEBI" id="CHEBI:29108"/>
        <label>2</label>
    </ligand>
</feature>
<feature type="binding site" evidence="3">
    <location>
        <position position="327"/>
    </location>
    <ligand>
        <name>Ca(2+)</name>
        <dbReference type="ChEBI" id="CHEBI:29108"/>
        <label>2</label>
    </ligand>
</feature>
<feature type="binding site" evidence="3">
    <location>
        <position position="332"/>
    </location>
    <ligand>
        <name>Ca(2+)</name>
        <dbReference type="ChEBI" id="CHEBI:29108"/>
        <label>2</label>
    </ligand>
</feature>
<feature type="binding site" evidence="2">
    <location>
        <begin position="433"/>
        <end position="440"/>
    </location>
    <ligand>
        <name>GTP</name>
        <dbReference type="ChEBI" id="CHEBI:37565"/>
        <label>2</label>
    </ligand>
</feature>
<feature type="binding site" evidence="2">
    <location>
        <begin position="470"/>
        <end position="474"/>
    </location>
    <ligand>
        <name>GTP</name>
        <dbReference type="ChEBI" id="CHEBI:37565"/>
        <label>2</label>
    </ligand>
</feature>
<feature type="binding site" evidence="2">
    <location>
        <begin position="537"/>
        <end position="540"/>
    </location>
    <ligand>
        <name>GTP</name>
        <dbReference type="ChEBI" id="CHEBI:37565"/>
        <label>2</label>
    </ligand>
</feature>
<gene>
    <name evidence="6" type="primary">miro-1</name>
    <name evidence="6" type="ORF">K08F11.5</name>
</gene>
<dbReference type="EC" id="3.6.5.-"/>
<dbReference type="EMBL" id="BX284604">
    <property type="protein sequence ID" value="CCD68726.1"/>
    <property type="molecule type" value="Genomic_DNA"/>
</dbReference>
<dbReference type="PIR" id="T30022">
    <property type="entry name" value="T30022"/>
</dbReference>
<dbReference type="RefSeq" id="NP_500620.1">
    <property type="nucleotide sequence ID" value="NM_068219.4"/>
</dbReference>
<dbReference type="SMR" id="Q94263"/>
<dbReference type="FunCoup" id="Q94263">
    <property type="interactions" value="3175"/>
</dbReference>
<dbReference type="STRING" id="6239.K08F11.5.1"/>
<dbReference type="PaxDb" id="6239-K08F11.5"/>
<dbReference type="PeptideAtlas" id="Q94263"/>
<dbReference type="EnsemblMetazoa" id="K08F11.5.1">
    <property type="protein sequence ID" value="K08F11.5.1"/>
    <property type="gene ID" value="WBGene00019544"/>
</dbReference>
<dbReference type="GeneID" id="177238"/>
<dbReference type="KEGG" id="cel:CELE_K08F11.5"/>
<dbReference type="UCSC" id="K08F11.5.1">
    <property type="organism name" value="c. elegans"/>
</dbReference>
<dbReference type="AGR" id="WB:WBGene00019544"/>
<dbReference type="CTD" id="177238"/>
<dbReference type="WormBase" id="K08F11.5">
    <property type="protein sequence ID" value="CE11958"/>
    <property type="gene ID" value="WBGene00019544"/>
    <property type="gene designation" value="miro-1"/>
</dbReference>
<dbReference type="eggNOG" id="KOG1707">
    <property type="taxonomic scope" value="Eukaryota"/>
</dbReference>
<dbReference type="GeneTree" id="ENSGT00940000173880"/>
<dbReference type="HOGENOM" id="CLU_014255_3_1_1"/>
<dbReference type="InParanoid" id="Q94263"/>
<dbReference type="OMA" id="FWFAQKA"/>
<dbReference type="OrthoDB" id="10020961at2759"/>
<dbReference type="PhylomeDB" id="Q94263"/>
<dbReference type="Reactome" id="R-CEL-5689880">
    <property type="pathway name" value="Ub-specific processing proteases"/>
</dbReference>
<dbReference type="Reactome" id="R-CEL-9013419">
    <property type="pathway name" value="RHOT2 GTPase cycle"/>
</dbReference>
<dbReference type="Reactome" id="R-CEL-9013425">
    <property type="pathway name" value="RHOT1 GTPase cycle"/>
</dbReference>
<dbReference type="PRO" id="PR:Q94263"/>
<dbReference type="Proteomes" id="UP000001940">
    <property type="component" value="Chromosome IV"/>
</dbReference>
<dbReference type="Bgee" id="WBGene00019544">
    <property type="expression patterns" value="Expressed in pharyngeal muscle cell (C elegans) and 3 other cell types or tissues"/>
</dbReference>
<dbReference type="GO" id="GO:0005741">
    <property type="term" value="C:mitochondrial outer membrane"/>
    <property type="evidence" value="ECO:0000250"/>
    <property type="project" value="UniProtKB"/>
</dbReference>
<dbReference type="GO" id="GO:0005509">
    <property type="term" value="F:calcium ion binding"/>
    <property type="evidence" value="ECO:0007669"/>
    <property type="project" value="InterPro"/>
</dbReference>
<dbReference type="GO" id="GO:0005525">
    <property type="term" value="F:GTP binding"/>
    <property type="evidence" value="ECO:0000318"/>
    <property type="project" value="GO_Central"/>
</dbReference>
<dbReference type="GO" id="GO:0003924">
    <property type="term" value="F:GTPase activity"/>
    <property type="evidence" value="ECO:0000318"/>
    <property type="project" value="GO_Central"/>
</dbReference>
<dbReference type="GO" id="GO:0019725">
    <property type="term" value="P:cellular homeostasis"/>
    <property type="evidence" value="ECO:0000250"/>
    <property type="project" value="UniProtKB"/>
</dbReference>
<dbReference type="GO" id="GO:0097345">
    <property type="term" value="P:mitochondrial outer membrane permeabilization"/>
    <property type="evidence" value="ECO:0000250"/>
    <property type="project" value="UniProtKB"/>
</dbReference>
<dbReference type="GO" id="GO:0007005">
    <property type="term" value="P:mitochondrion organization"/>
    <property type="evidence" value="ECO:0000315"/>
    <property type="project" value="WormBase"/>
</dbReference>
<dbReference type="GO" id="GO:0047497">
    <property type="term" value="P:mitochondrion transport along microtubule"/>
    <property type="evidence" value="ECO:0000250"/>
    <property type="project" value="UniProtKB"/>
</dbReference>
<dbReference type="CDD" id="cd01893">
    <property type="entry name" value="Miro1"/>
    <property type="match status" value="1"/>
</dbReference>
<dbReference type="CDD" id="cd01892">
    <property type="entry name" value="Miro2"/>
    <property type="match status" value="1"/>
</dbReference>
<dbReference type="FunFam" id="1.10.238.10:FF:000011">
    <property type="entry name" value="Mitochondrial Rho GTPase"/>
    <property type="match status" value="1"/>
</dbReference>
<dbReference type="FunFam" id="3.40.50.300:FF:000553">
    <property type="entry name" value="Mitochondrial Rho GTPase"/>
    <property type="match status" value="1"/>
</dbReference>
<dbReference type="FunFam" id="3.40.50.300:FF:003521">
    <property type="entry name" value="Mitochondrial Rho GTPase 1"/>
    <property type="match status" value="1"/>
</dbReference>
<dbReference type="Gene3D" id="1.10.238.10">
    <property type="entry name" value="EF-hand"/>
    <property type="match status" value="2"/>
</dbReference>
<dbReference type="Gene3D" id="3.40.50.300">
    <property type="entry name" value="P-loop containing nucleotide triphosphate hydrolases"/>
    <property type="match status" value="2"/>
</dbReference>
<dbReference type="InterPro" id="IPR011992">
    <property type="entry name" value="EF-hand-dom_pair"/>
</dbReference>
<dbReference type="InterPro" id="IPR018247">
    <property type="entry name" value="EF_Hand_1_Ca_BS"/>
</dbReference>
<dbReference type="InterPro" id="IPR013566">
    <property type="entry name" value="EF_hand_assoc_1"/>
</dbReference>
<dbReference type="InterPro" id="IPR013567">
    <property type="entry name" value="EF_hand_assoc_2"/>
</dbReference>
<dbReference type="InterPro" id="IPR002048">
    <property type="entry name" value="EF_hand_dom"/>
</dbReference>
<dbReference type="InterPro" id="IPR021181">
    <property type="entry name" value="Miro"/>
</dbReference>
<dbReference type="InterPro" id="IPR052266">
    <property type="entry name" value="Miro-EF-hand_domain"/>
</dbReference>
<dbReference type="InterPro" id="IPR020860">
    <property type="entry name" value="MIRO_dom"/>
</dbReference>
<dbReference type="InterPro" id="IPR027417">
    <property type="entry name" value="P-loop_NTPase"/>
</dbReference>
<dbReference type="InterPro" id="IPR001806">
    <property type="entry name" value="Small_GTPase"/>
</dbReference>
<dbReference type="PANTHER" id="PTHR46819">
    <property type="entry name" value="EF-HAND CALCIUM-BINDING DOMAIN-CONTAINING PROTEIN 7"/>
    <property type="match status" value="1"/>
</dbReference>
<dbReference type="PANTHER" id="PTHR46819:SF1">
    <property type="entry name" value="EF-HAND CALCIUM-BINDING DOMAIN-CONTAINING PROTEIN 7"/>
    <property type="match status" value="1"/>
</dbReference>
<dbReference type="Pfam" id="PF13202">
    <property type="entry name" value="EF-hand_5"/>
    <property type="match status" value="2"/>
</dbReference>
<dbReference type="Pfam" id="PF08355">
    <property type="entry name" value="EF_assoc_1"/>
    <property type="match status" value="1"/>
</dbReference>
<dbReference type="Pfam" id="PF08356">
    <property type="entry name" value="EF_assoc_2"/>
    <property type="match status" value="1"/>
</dbReference>
<dbReference type="Pfam" id="PF00071">
    <property type="entry name" value="Ras"/>
    <property type="match status" value="1"/>
</dbReference>
<dbReference type="PIRSF" id="PIRSF037488">
    <property type="entry name" value="Mt_Rho_GTPase"/>
    <property type="match status" value="1"/>
</dbReference>
<dbReference type="PRINTS" id="PR00449">
    <property type="entry name" value="RASTRNSFRMNG"/>
</dbReference>
<dbReference type="SMART" id="SM00054">
    <property type="entry name" value="EFh"/>
    <property type="match status" value="2"/>
</dbReference>
<dbReference type="SMART" id="SM00175">
    <property type="entry name" value="RAB"/>
    <property type="match status" value="1"/>
</dbReference>
<dbReference type="SMART" id="SM00173">
    <property type="entry name" value="RAS"/>
    <property type="match status" value="1"/>
</dbReference>
<dbReference type="SMART" id="SM00174">
    <property type="entry name" value="RHO"/>
    <property type="match status" value="1"/>
</dbReference>
<dbReference type="SUPFAM" id="SSF47473">
    <property type="entry name" value="EF-hand"/>
    <property type="match status" value="1"/>
</dbReference>
<dbReference type="SUPFAM" id="SSF52540">
    <property type="entry name" value="P-loop containing nucleoside triphosphate hydrolases"/>
    <property type="match status" value="2"/>
</dbReference>
<dbReference type="PROSITE" id="PS00018">
    <property type="entry name" value="EF_HAND_1"/>
    <property type="match status" value="2"/>
</dbReference>
<dbReference type="PROSITE" id="PS50222">
    <property type="entry name" value="EF_HAND_2"/>
    <property type="match status" value="2"/>
</dbReference>
<dbReference type="PROSITE" id="PS51423">
    <property type="entry name" value="MIRO"/>
    <property type="match status" value="2"/>
</dbReference>
<name>MIRO1_CAEEL</name>
<comment type="function">
    <text evidence="1 4">Mitochondrial GTPase involved in mitochondrial trafficking (By similarity). Probably involved in control of anterograde transport of mitochondria and their subcellular distribution (By similarity). Plays a role in maintaining mitochondrial morphology (PubMed:25190516).</text>
</comment>
<comment type="subcellular location">
    <subcellularLocation>
        <location evidence="1">Mitochondrion outer membrane</location>
        <topology evidence="2">Single-pass type IV membrane protein</topology>
    </subcellularLocation>
</comment>
<comment type="disruption phenotype">
    <text evidence="4">RNAi-mediated knockdown results in a hyper-connected mitochondrial network in body wall muscle cells.</text>
</comment>
<comment type="similarity">
    <text evidence="5">Belongs to the mitochondrial Rho GTPase family.</text>
</comment>
<keyword id="KW-0106">Calcium</keyword>
<keyword id="KW-0342">GTP-binding</keyword>
<keyword id="KW-0378">Hydrolase</keyword>
<keyword id="KW-0472">Membrane</keyword>
<keyword id="KW-0479">Metal-binding</keyword>
<keyword id="KW-0496">Mitochondrion</keyword>
<keyword id="KW-1000">Mitochondrion outer membrane</keyword>
<keyword id="KW-0547">Nucleotide-binding</keyword>
<keyword id="KW-1185">Reference proteome</keyword>
<keyword id="KW-0677">Repeat</keyword>
<keyword id="KW-0812">Transmembrane</keyword>
<keyword id="KW-1133">Transmembrane helix</keyword>
<organism>
    <name type="scientific">Caenorhabditis elegans</name>
    <dbReference type="NCBI Taxonomy" id="6239"/>
    <lineage>
        <taxon>Eukaryota</taxon>
        <taxon>Metazoa</taxon>
        <taxon>Ecdysozoa</taxon>
        <taxon>Nematoda</taxon>
        <taxon>Chromadorea</taxon>
        <taxon>Rhabditida</taxon>
        <taxon>Rhabditina</taxon>
        <taxon>Rhabditomorpha</taxon>
        <taxon>Rhabditoidea</taxon>
        <taxon>Rhabditidae</taxon>
        <taxon>Peloderinae</taxon>
        <taxon>Caenorhabditis</taxon>
    </lineage>
</organism>
<sequence length="625" mass="70222">MSDDETLADVRIVLIGDEGCGKTSLVMSLLEDEWVDAVPRRLDRVLIPADVTPENVTTSIVDLSIKEEDENWIVSEIRQANVICVVYSVTDESTVDGIQTKWLPLIRQSFGEYHETPVILVGNKSDGTANNTDKILPIMEANTEVETCVECSARTMKNVSEIFYYAQKAVIYPTRPLYDADTKQLTDRARKALIRVFKICDRDNDGYLSDTELNDFQKLCFGIPLTSTALEDVKRAVSDGCPDGVANDSLMLAGFLYLHLLFIERGRHETTWAVLRKFGYETSLKLSEDYLYPRITIPVGCSTELSPEGVQFVSALFEKYDEDKDGCLSPSELQNLFSVCPVPVITKDNILALETNQRGWLTYNGYMAYWNMTTLINLTQTFEQLAYLGFPVGRSGPGRAGNTLDSIRVTRERKKDLENHGTDRKVFQCLVVGAKDAGKTVFMQSLAGRGMADVAQIGRRHSPFVINRVRVKEESKYLLLREVDVLSPQDALGSGETSADVVAFLYDISNPDSFAFCATVYQKYFYRTKTPCVMIATKVEREEVDQRWEVPPEEFCRQFELPKPIKFSTGNIGQSSSPIFEQLAMMAVYPHLRRVFYLNDSNLLSKITFGAAIVALAGFLVLKNL</sequence>
<protein>
    <recommendedName>
        <fullName>Mitochondrial Rho GTPase 1</fullName>
        <shortName>Miro</shortName>
        <ecNumber>3.6.5.-</ecNumber>
    </recommendedName>
</protein>
<accession>Q94263</accession>
<reference key="1">
    <citation type="journal article" date="1998" name="Science">
        <title>Genome sequence of the nematode C. elegans: a platform for investigating biology.</title>
        <authorList>
            <consortium name="The C. elegans sequencing consortium"/>
        </authorList>
    </citation>
    <scope>NUCLEOTIDE SEQUENCE [LARGE SCALE GENOMIC DNA]</scope>
    <source>
        <strain>Bristol N2</strain>
    </source>
</reference>
<reference key="2">
    <citation type="journal article" date="2014" name="EMBO J.">
        <title>The small GTPase Arf1 modulates mitochondrial morphology and function.</title>
        <authorList>
            <person name="Ackema K.B."/>
            <person name="Hench J."/>
            <person name="Boeckler S."/>
            <person name="Wang S.C."/>
            <person name="Sauder U."/>
            <person name="Mergentaler H."/>
            <person name="Westermann B."/>
            <person name="Bard F."/>
            <person name="Frank S."/>
            <person name="Spang A."/>
        </authorList>
    </citation>
    <scope>FUNCTION</scope>
    <scope>DISRUPTION PHENOTYPE</scope>
</reference>
<proteinExistence type="inferred from homology"/>
<evidence type="ECO:0000250" key="1">
    <source>
        <dbReference type="UniProtKB" id="Q8IXI2"/>
    </source>
</evidence>
<evidence type="ECO:0000255" key="2"/>
<evidence type="ECO:0000255" key="3">
    <source>
        <dbReference type="PROSITE-ProRule" id="PRU00448"/>
    </source>
</evidence>
<evidence type="ECO:0000269" key="4">
    <source>
    </source>
</evidence>
<evidence type="ECO:0000305" key="5"/>
<evidence type="ECO:0000312" key="6">
    <source>
        <dbReference type="WormBase" id="K08F11.5"/>
    </source>
</evidence>